<organism>
    <name type="scientific">Methanosarcina acetivorans (strain ATCC 35395 / DSM 2834 / JCM 12185 / C2A)</name>
    <dbReference type="NCBI Taxonomy" id="188937"/>
    <lineage>
        <taxon>Archaea</taxon>
        <taxon>Methanobacteriati</taxon>
        <taxon>Methanobacteriota</taxon>
        <taxon>Stenosarchaea group</taxon>
        <taxon>Methanomicrobia</taxon>
        <taxon>Methanosarcinales</taxon>
        <taxon>Methanosarcinaceae</taxon>
        <taxon>Methanosarcina</taxon>
    </lineage>
</organism>
<reference key="1">
    <citation type="journal article" date="2002" name="Genome Res.">
        <title>The genome of Methanosarcina acetivorans reveals extensive metabolic and physiological diversity.</title>
        <authorList>
            <person name="Galagan J.E."/>
            <person name="Nusbaum C."/>
            <person name="Roy A."/>
            <person name="Endrizzi M.G."/>
            <person name="Macdonald P."/>
            <person name="FitzHugh W."/>
            <person name="Calvo S."/>
            <person name="Engels R."/>
            <person name="Smirnov S."/>
            <person name="Atnoor D."/>
            <person name="Brown A."/>
            <person name="Allen N."/>
            <person name="Naylor J."/>
            <person name="Stange-Thomann N."/>
            <person name="DeArellano K."/>
            <person name="Johnson R."/>
            <person name="Linton L."/>
            <person name="McEwan P."/>
            <person name="McKernan K."/>
            <person name="Talamas J."/>
            <person name="Tirrell A."/>
            <person name="Ye W."/>
            <person name="Zimmer A."/>
            <person name="Barber R.D."/>
            <person name="Cann I."/>
            <person name="Graham D.E."/>
            <person name="Grahame D.A."/>
            <person name="Guss A.M."/>
            <person name="Hedderich R."/>
            <person name="Ingram-Smith C."/>
            <person name="Kuettner H.C."/>
            <person name="Krzycki J.A."/>
            <person name="Leigh J.A."/>
            <person name="Li W."/>
            <person name="Liu J."/>
            <person name="Mukhopadhyay B."/>
            <person name="Reeve J.N."/>
            <person name="Smith K."/>
            <person name="Springer T.A."/>
            <person name="Umayam L.A."/>
            <person name="White O."/>
            <person name="White R.H."/>
            <person name="de Macario E.C."/>
            <person name="Ferry J.G."/>
            <person name="Jarrell K.F."/>
            <person name="Jing H."/>
            <person name="Macario A.J.L."/>
            <person name="Paulsen I.T."/>
            <person name="Pritchett M."/>
            <person name="Sowers K.R."/>
            <person name="Swanson R.V."/>
            <person name="Zinder S.H."/>
            <person name="Lander E."/>
            <person name="Metcalf W.W."/>
            <person name="Birren B."/>
        </authorList>
    </citation>
    <scope>NUCLEOTIDE SEQUENCE [LARGE SCALE GENOMIC DNA]</scope>
    <source>
        <strain>ATCC 35395 / DSM 2834 / JCM 12185 / C2A</strain>
    </source>
</reference>
<evidence type="ECO:0000255" key="1">
    <source>
        <dbReference type="HAMAP-Rule" id="MF_00211"/>
    </source>
</evidence>
<proteinExistence type="inferred from homology"/>
<accession>Q8TLP5</accession>
<comment type="function">
    <text evidence="1">Catalyzes the transfer of the phosphoribosyl group of 5-phosphorylribose-1-pyrophosphate (PRPP) to anthranilate to yield N-(5'-phosphoribosyl)-anthranilate (PRA).</text>
</comment>
<comment type="catalytic activity">
    <reaction evidence="1">
        <text>N-(5-phospho-beta-D-ribosyl)anthranilate + diphosphate = 5-phospho-alpha-D-ribose 1-diphosphate + anthranilate</text>
        <dbReference type="Rhea" id="RHEA:11768"/>
        <dbReference type="ChEBI" id="CHEBI:16567"/>
        <dbReference type="ChEBI" id="CHEBI:18277"/>
        <dbReference type="ChEBI" id="CHEBI:33019"/>
        <dbReference type="ChEBI" id="CHEBI:58017"/>
        <dbReference type="EC" id="2.4.2.18"/>
    </reaction>
</comment>
<comment type="cofactor">
    <cofactor evidence="1">
        <name>Mg(2+)</name>
        <dbReference type="ChEBI" id="CHEBI:18420"/>
    </cofactor>
    <text evidence="1">Binds 2 magnesium ions per monomer.</text>
</comment>
<comment type="pathway">
    <text evidence="1">Amino-acid biosynthesis; L-tryptophan biosynthesis; L-tryptophan from chorismate: step 2/5.</text>
</comment>
<comment type="subunit">
    <text evidence="1">Homodimer.</text>
</comment>
<comment type="similarity">
    <text evidence="1">Belongs to the anthranilate phosphoribosyltransferase family.</text>
</comment>
<feature type="chain" id="PRO_0000154511" description="Anthranilate phosphoribosyltransferase">
    <location>
        <begin position="1"/>
        <end position="370"/>
    </location>
</feature>
<feature type="binding site" evidence="1">
    <location>
        <position position="82"/>
    </location>
    <ligand>
        <name>5-phospho-alpha-D-ribose 1-diphosphate</name>
        <dbReference type="ChEBI" id="CHEBI:58017"/>
    </ligand>
</feature>
<feature type="binding site" evidence="1">
    <location>
        <position position="82"/>
    </location>
    <ligand>
        <name>anthranilate</name>
        <dbReference type="ChEBI" id="CHEBI:16567"/>
        <label>1</label>
    </ligand>
</feature>
<feature type="binding site" evidence="1">
    <location>
        <begin position="85"/>
        <end position="86"/>
    </location>
    <ligand>
        <name>5-phospho-alpha-D-ribose 1-diphosphate</name>
        <dbReference type="ChEBI" id="CHEBI:58017"/>
    </ligand>
</feature>
<feature type="binding site" evidence="1">
    <location>
        <position position="90"/>
    </location>
    <ligand>
        <name>5-phospho-alpha-D-ribose 1-diphosphate</name>
        <dbReference type="ChEBI" id="CHEBI:58017"/>
    </ligand>
</feature>
<feature type="binding site" evidence="1">
    <location>
        <begin position="92"/>
        <end position="95"/>
    </location>
    <ligand>
        <name>5-phospho-alpha-D-ribose 1-diphosphate</name>
        <dbReference type="ChEBI" id="CHEBI:58017"/>
    </ligand>
</feature>
<feature type="binding site" evidence="1">
    <location>
        <position position="94"/>
    </location>
    <ligand>
        <name>Mg(2+)</name>
        <dbReference type="ChEBI" id="CHEBI:18420"/>
        <label>1</label>
    </ligand>
</feature>
<feature type="binding site" evidence="1">
    <location>
        <begin position="110"/>
        <end position="118"/>
    </location>
    <ligand>
        <name>5-phospho-alpha-D-ribose 1-diphosphate</name>
        <dbReference type="ChEBI" id="CHEBI:58017"/>
    </ligand>
</feature>
<feature type="binding site" evidence="1">
    <location>
        <position position="113"/>
    </location>
    <ligand>
        <name>anthranilate</name>
        <dbReference type="ChEBI" id="CHEBI:16567"/>
        <label>1</label>
    </ligand>
</feature>
<feature type="binding site" evidence="1">
    <location>
        <position position="122"/>
    </location>
    <ligand>
        <name>5-phospho-alpha-D-ribose 1-diphosphate</name>
        <dbReference type="ChEBI" id="CHEBI:58017"/>
    </ligand>
</feature>
<feature type="binding site" evidence="1">
    <location>
        <position position="168"/>
    </location>
    <ligand>
        <name>anthranilate</name>
        <dbReference type="ChEBI" id="CHEBI:16567"/>
        <label>2</label>
    </ligand>
</feature>
<feature type="binding site" evidence="1">
    <location>
        <position position="226"/>
    </location>
    <ligand>
        <name>Mg(2+)</name>
        <dbReference type="ChEBI" id="CHEBI:18420"/>
        <label>2</label>
    </ligand>
</feature>
<feature type="binding site" evidence="1">
    <location>
        <position position="227"/>
    </location>
    <ligand>
        <name>Mg(2+)</name>
        <dbReference type="ChEBI" id="CHEBI:18420"/>
        <label>1</label>
    </ligand>
</feature>
<feature type="binding site" evidence="1">
    <location>
        <position position="227"/>
    </location>
    <ligand>
        <name>Mg(2+)</name>
        <dbReference type="ChEBI" id="CHEBI:18420"/>
        <label>2</label>
    </ligand>
</feature>
<dbReference type="EC" id="2.4.2.18" evidence="1"/>
<dbReference type="EMBL" id="AE010299">
    <property type="protein sequence ID" value="AAM06362.1"/>
    <property type="molecule type" value="Genomic_DNA"/>
</dbReference>
<dbReference type="RefSeq" id="WP_011022929.1">
    <property type="nucleotide sequence ID" value="NC_003552.1"/>
</dbReference>
<dbReference type="SMR" id="Q8TLP5"/>
<dbReference type="FunCoup" id="Q8TLP5">
    <property type="interactions" value="120"/>
</dbReference>
<dbReference type="STRING" id="188937.MA_2989"/>
<dbReference type="EnsemblBacteria" id="AAM06362">
    <property type="protein sequence ID" value="AAM06362"/>
    <property type="gene ID" value="MA_2989"/>
</dbReference>
<dbReference type="GeneID" id="1474883"/>
<dbReference type="KEGG" id="mac:MA_2989"/>
<dbReference type="HOGENOM" id="CLU_034315_2_1_2"/>
<dbReference type="InParanoid" id="Q8TLP5"/>
<dbReference type="OrthoDB" id="8214at2157"/>
<dbReference type="PhylomeDB" id="Q8TLP5"/>
<dbReference type="UniPathway" id="UPA00035">
    <property type="reaction ID" value="UER00041"/>
</dbReference>
<dbReference type="Proteomes" id="UP000002487">
    <property type="component" value="Chromosome"/>
</dbReference>
<dbReference type="GO" id="GO:0005829">
    <property type="term" value="C:cytosol"/>
    <property type="evidence" value="ECO:0000318"/>
    <property type="project" value="GO_Central"/>
</dbReference>
<dbReference type="GO" id="GO:0004048">
    <property type="term" value="F:anthranilate phosphoribosyltransferase activity"/>
    <property type="evidence" value="ECO:0007669"/>
    <property type="project" value="UniProtKB-UniRule"/>
</dbReference>
<dbReference type="GO" id="GO:0000287">
    <property type="term" value="F:magnesium ion binding"/>
    <property type="evidence" value="ECO:0007669"/>
    <property type="project" value="UniProtKB-UniRule"/>
</dbReference>
<dbReference type="GO" id="GO:0000162">
    <property type="term" value="P:L-tryptophan biosynthetic process"/>
    <property type="evidence" value="ECO:0000318"/>
    <property type="project" value="GO_Central"/>
</dbReference>
<dbReference type="FunFam" id="3.40.1030.10:FF:000002">
    <property type="entry name" value="Anthranilate phosphoribosyltransferase"/>
    <property type="match status" value="1"/>
</dbReference>
<dbReference type="Gene3D" id="3.40.1030.10">
    <property type="entry name" value="Nucleoside phosphorylase/phosphoribosyltransferase catalytic domain"/>
    <property type="match status" value="1"/>
</dbReference>
<dbReference type="Gene3D" id="1.20.970.10">
    <property type="entry name" value="Transferase, Pyrimidine Nucleoside Phosphorylase, Chain C"/>
    <property type="match status" value="1"/>
</dbReference>
<dbReference type="HAMAP" id="MF_00211">
    <property type="entry name" value="TrpD"/>
    <property type="match status" value="1"/>
</dbReference>
<dbReference type="InterPro" id="IPR005940">
    <property type="entry name" value="Anthranilate_Pribosyl_Tfrase"/>
</dbReference>
<dbReference type="InterPro" id="IPR000312">
    <property type="entry name" value="Glycosyl_Trfase_fam3"/>
</dbReference>
<dbReference type="InterPro" id="IPR017459">
    <property type="entry name" value="Glycosyl_Trfase_fam3_N_dom"/>
</dbReference>
<dbReference type="InterPro" id="IPR036320">
    <property type="entry name" value="Glycosyl_Trfase_fam3_N_dom_sf"/>
</dbReference>
<dbReference type="InterPro" id="IPR035902">
    <property type="entry name" value="Nuc_phospho_transferase"/>
</dbReference>
<dbReference type="NCBIfam" id="TIGR01245">
    <property type="entry name" value="trpD"/>
    <property type="match status" value="1"/>
</dbReference>
<dbReference type="PANTHER" id="PTHR43285">
    <property type="entry name" value="ANTHRANILATE PHOSPHORIBOSYLTRANSFERASE"/>
    <property type="match status" value="1"/>
</dbReference>
<dbReference type="PANTHER" id="PTHR43285:SF2">
    <property type="entry name" value="ANTHRANILATE PHOSPHORIBOSYLTRANSFERASE"/>
    <property type="match status" value="1"/>
</dbReference>
<dbReference type="Pfam" id="PF02885">
    <property type="entry name" value="Glycos_trans_3N"/>
    <property type="match status" value="1"/>
</dbReference>
<dbReference type="Pfam" id="PF00591">
    <property type="entry name" value="Glycos_transf_3"/>
    <property type="match status" value="1"/>
</dbReference>
<dbReference type="SUPFAM" id="SSF52418">
    <property type="entry name" value="Nucleoside phosphorylase/phosphoribosyltransferase catalytic domain"/>
    <property type="match status" value="1"/>
</dbReference>
<dbReference type="SUPFAM" id="SSF47648">
    <property type="entry name" value="Nucleoside phosphorylase/phosphoribosyltransferase N-terminal domain"/>
    <property type="match status" value="1"/>
</dbReference>
<gene>
    <name evidence="1" type="primary">trpD</name>
    <name type="ordered locus">MA_2989</name>
</gene>
<keyword id="KW-0028">Amino-acid biosynthesis</keyword>
<keyword id="KW-0057">Aromatic amino acid biosynthesis</keyword>
<keyword id="KW-0328">Glycosyltransferase</keyword>
<keyword id="KW-0460">Magnesium</keyword>
<keyword id="KW-0479">Metal-binding</keyword>
<keyword id="KW-1185">Reference proteome</keyword>
<keyword id="KW-0808">Transferase</keyword>
<keyword id="KW-0822">Tryptophan biosynthesis</keyword>
<sequence length="370" mass="38747">MKGMKEYIKKLEEGSDLSSEEAEAAIGEILSTAEDEEIGAFLLALRAKGEKPQEIAGFVRGMKQAGNTIKPVTPFRVIDTCGTGGDGLNTINVSTAAAIVTAAAGVPVAKHGNRAATSMSGSSDVLEALGIKVDLTPGQVRKTIEKIGIGFMFAPVFHPAMKRVAGVRKKLGVRTVFNILGPLTNPAGAKGQVVGVFDKKLCEPIAYALAELGTEHALVVHGDGMDEISNTGETFVAELKDGEVSTYTITPEAMGMLRAKPEDIKGGTPKENARDLLCIFKGQKGPKRDLVILNAAAALYVSGIVGSIRQAIPIAEDAIDSGKVMVKFNQFRNFTAELSIQGKKEGSCPGEAFLASSDTSVLSPASGEKA</sequence>
<protein>
    <recommendedName>
        <fullName evidence="1">Anthranilate phosphoribosyltransferase</fullName>
        <ecNumber evidence="1">2.4.2.18</ecNumber>
    </recommendedName>
</protein>
<name>TRPD_METAC</name>